<evidence type="ECO:0000250" key="1"/>
<evidence type="ECO:0000305" key="2"/>
<gene>
    <name type="primary">tsaE</name>
    <name type="ordered locus">alr2300</name>
</gene>
<proteinExistence type="inferred from homology"/>
<reference key="1">
    <citation type="journal article" date="1998" name="Science">
        <title>Heterocyst pattern formation controlled by a diffusible peptide.</title>
        <authorList>
            <person name="Yoon H.-S."/>
            <person name="Golden J.W."/>
        </authorList>
    </citation>
    <scope>NUCLEOTIDE SEQUENCE [GENOMIC DNA]</scope>
</reference>
<reference key="2">
    <citation type="journal article" date="2001" name="DNA Res.">
        <title>Complete genomic sequence of the filamentous nitrogen-fixing cyanobacterium Anabaena sp. strain PCC 7120.</title>
        <authorList>
            <person name="Kaneko T."/>
            <person name="Nakamura Y."/>
            <person name="Wolk C.P."/>
            <person name="Kuritz T."/>
            <person name="Sasamoto S."/>
            <person name="Watanabe A."/>
            <person name="Iriguchi M."/>
            <person name="Ishikawa A."/>
            <person name="Kawashima K."/>
            <person name="Kimura T."/>
            <person name="Kishida Y."/>
            <person name="Kohara M."/>
            <person name="Matsumoto M."/>
            <person name="Matsuno A."/>
            <person name="Muraki A."/>
            <person name="Nakazaki N."/>
            <person name="Shimpo S."/>
            <person name="Sugimoto M."/>
            <person name="Takazawa M."/>
            <person name="Yamada M."/>
            <person name="Yasuda M."/>
            <person name="Tabata S."/>
        </authorList>
    </citation>
    <scope>NUCLEOTIDE SEQUENCE [LARGE SCALE GENOMIC DNA]</scope>
    <source>
        <strain>PCC 7120 / SAG 25.82 / UTEX 2576</strain>
    </source>
</reference>
<comment type="function">
    <text evidence="1">Required for the formation of a threonylcarbamoyl group on adenosine at position 37 (t(6)A37) in tRNAs that read codons beginning with adenine. Is involved in the transfer of the threonylcarbamoyl moiety of threonylcarbamoyl-AMP (TC-AMP) to the N6 group of A37, together with TsaD and TsaB. TsaE seems to play an indirect role in the t(6)A biosynthesis pathway, possibly in regulating the core enzymatic function of TsaD (By similarity).</text>
</comment>
<comment type="subcellular location">
    <subcellularLocation>
        <location evidence="1">Cytoplasm</location>
    </subcellularLocation>
</comment>
<comment type="similarity">
    <text evidence="2">Belongs to the TsaE family.</text>
</comment>
<feature type="chain" id="PRO_0000096209" description="tRNA threonylcarbamoyladenosine biosynthesis protein TsaE">
    <location>
        <begin position="1"/>
        <end position="162"/>
    </location>
</feature>
<feature type="binding site" evidence="1">
    <location>
        <begin position="46"/>
        <end position="51"/>
    </location>
    <ligand>
        <name>ATP</name>
        <dbReference type="ChEBI" id="CHEBI:30616"/>
    </ligand>
</feature>
<feature type="binding site" evidence="1">
    <location>
        <position position="50"/>
    </location>
    <ligand>
        <name>Mg(2+)</name>
        <dbReference type="ChEBI" id="CHEBI:18420"/>
    </ligand>
</feature>
<feature type="binding site" evidence="1">
    <location>
        <position position="119"/>
    </location>
    <ligand>
        <name>Mg(2+)</name>
        <dbReference type="ChEBI" id="CHEBI:18420"/>
    </ligand>
</feature>
<feature type="binding site" evidence="1">
    <location>
        <position position="141"/>
    </location>
    <ligand>
        <name>ATP</name>
        <dbReference type="ChEBI" id="CHEBI:30616"/>
    </ligand>
</feature>
<name>TSAE_NOSS1</name>
<dbReference type="EMBL" id="AF046871">
    <property type="protein sequence ID" value="AAC03104.1"/>
    <property type="molecule type" value="Genomic_DNA"/>
</dbReference>
<dbReference type="EMBL" id="BA000019">
    <property type="protein sequence ID" value="BAB73999.1"/>
    <property type="molecule type" value="Genomic_DNA"/>
</dbReference>
<dbReference type="PIR" id="AE2093">
    <property type="entry name" value="AE2093"/>
</dbReference>
<dbReference type="SMR" id="O52749"/>
<dbReference type="STRING" id="103690.gene:10494329"/>
<dbReference type="KEGG" id="ana:alr2300"/>
<dbReference type="eggNOG" id="COG0802">
    <property type="taxonomic scope" value="Bacteria"/>
</dbReference>
<dbReference type="Proteomes" id="UP000002483">
    <property type="component" value="Chromosome"/>
</dbReference>
<dbReference type="GO" id="GO:0005737">
    <property type="term" value="C:cytoplasm"/>
    <property type="evidence" value="ECO:0007669"/>
    <property type="project" value="UniProtKB-SubCell"/>
</dbReference>
<dbReference type="GO" id="GO:0005524">
    <property type="term" value="F:ATP binding"/>
    <property type="evidence" value="ECO:0007669"/>
    <property type="project" value="UniProtKB-KW"/>
</dbReference>
<dbReference type="GO" id="GO:0046872">
    <property type="term" value="F:metal ion binding"/>
    <property type="evidence" value="ECO:0007669"/>
    <property type="project" value="UniProtKB-KW"/>
</dbReference>
<dbReference type="GO" id="GO:0002949">
    <property type="term" value="P:tRNA threonylcarbamoyladenosine modification"/>
    <property type="evidence" value="ECO:0007669"/>
    <property type="project" value="InterPro"/>
</dbReference>
<dbReference type="Gene3D" id="3.40.50.300">
    <property type="entry name" value="P-loop containing nucleotide triphosphate hydrolases"/>
    <property type="match status" value="1"/>
</dbReference>
<dbReference type="InterPro" id="IPR027417">
    <property type="entry name" value="P-loop_NTPase"/>
</dbReference>
<dbReference type="InterPro" id="IPR003442">
    <property type="entry name" value="T6A_TsaE"/>
</dbReference>
<dbReference type="NCBIfam" id="TIGR00150">
    <property type="entry name" value="T6A_YjeE"/>
    <property type="match status" value="1"/>
</dbReference>
<dbReference type="PANTHER" id="PTHR33540">
    <property type="entry name" value="TRNA THREONYLCARBAMOYLADENOSINE BIOSYNTHESIS PROTEIN TSAE"/>
    <property type="match status" value="1"/>
</dbReference>
<dbReference type="PANTHER" id="PTHR33540:SF2">
    <property type="entry name" value="TRNA THREONYLCARBAMOYLADENOSINE BIOSYNTHESIS PROTEIN TSAE"/>
    <property type="match status" value="1"/>
</dbReference>
<dbReference type="Pfam" id="PF02367">
    <property type="entry name" value="TsaE"/>
    <property type="match status" value="1"/>
</dbReference>
<dbReference type="SUPFAM" id="SSF52540">
    <property type="entry name" value="P-loop containing nucleoside triphosphate hydrolases"/>
    <property type="match status" value="1"/>
</dbReference>
<organism>
    <name type="scientific">Nostoc sp. (strain PCC 7120 / SAG 25.82 / UTEX 2576)</name>
    <dbReference type="NCBI Taxonomy" id="103690"/>
    <lineage>
        <taxon>Bacteria</taxon>
        <taxon>Bacillati</taxon>
        <taxon>Cyanobacteriota</taxon>
        <taxon>Cyanophyceae</taxon>
        <taxon>Nostocales</taxon>
        <taxon>Nostocaceae</taxon>
        <taxon>Nostoc</taxon>
    </lineage>
</organism>
<accession>O52749</accession>
<protein>
    <recommendedName>
        <fullName>tRNA threonylcarbamoyladenosine biosynthesis protein TsaE</fullName>
    </recommendedName>
    <alternativeName>
        <fullName>t(6)A37 threonylcarbamoyladenosine biosynthesis protein TsaE</fullName>
    </alternativeName>
</protein>
<sequence>MTIDQMTIDQMTKIFLADKESTLNLGILLGETLTAGSVILLEGDLGAGKTTLVQGLGKGLSITEPIVSPTFTLINEYTEGRIPLYHLDLYRLEPQEVLSLNLEIYWEGIEIIPGIVAIEWSERMPYKPSTYINVLLTYGDEGSRQAEITPFNCTISDLIATK</sequence>
<keyword id="KW-0067">ATP-binding</keyword>
<keyword id="KW-0963">Cytoplasm</keyword>
<keyword id="KW-0460">Magnesium</keyword>
<keyword id="KW-0479">Metal-binding</keyword>
<keyword id="KW-0547">Nucleotide-binding</keyword>
<keyword id="KW-1185">Reference proteome</keyword>
<keyword id="KW-0819">tRNA processing</keyword>